<evidence type="ECO:0000255" key="1">
    <source>
        <dbReference type="HAMAP-Rule" id="MF_00268"/>
    </source>
</evidence>
<organism>
    <name type="scientific">Salmonella paratyphi B (strain ATCC BAA-1250 / SPB7)</name>
    <dbReference type="NCBI Taxonomy" id="1016998"/>
    <lineage>
        <taxon>Bacteria</taxon>
        <taxon>Pseudomonadati</taxon>
        <taxon>Pseudomonadota</taxon>
        <taxon>Gammaproteobacteria</taxon>
        <taxon>Enterobacterales</taxon>
        <taxon>Enterobacteriaceae</taxon>
        <taxon>Salmonella</taxon>
    </lineage>
</organism>
<sequence length="353" mass="37944">MAIDENKQKALAAALGQIEKQFGKGSIMRLGEDRSMDVETISTGSLSLDIALGAGGLPMGRIVEIYGPESSGKTTLTLQVIAAAQREGKTCAFIDAEHALDPVYARKLGVDIDNLLCSQPDTGEQALEICDALARSGAVDVIVVDSVAALTPKAEIEGEIGDSHMGLAARMMSQAMRKLAGNLKQSNTLLIFINQIRMKIGVMFGNPETTTGGNALKFYASVRLDIRRIGAVKEGDNVVGSETRVKVVKNKIAAPFKQAEFQILYGEGINFYGELVDLGVKEKLIEKAGAWYSYNGEKIGQGKANATTWLKENPATAKEIEKRVRELLLSNQNATPDFAVDDSEGVAETNEDF</sequence>
<accession>A9N0C5</accession>
<reference key="1">
    <citation type="submission" date="2007-11" db="EMBL/GenBank/DDBJ databases">
        <authorList>
            <consortium name="The Salmonella enterica serovar Paratyphi B Genome Sequencing Project"/>
            <person name="McClelland M."/>
            <person name="Sanderson E.K."/>
            <person name="Porwollik S."/>
            <person name="Spieth J."/>
            <person name="Clifton W.S."/>
            <person name="Fulton R."/>
            <person name="Cordes M."/>
            <person name="Wollam A."/>
            <person name="Shah N."/>
            <person name="Pepin K."/>
            <person name="Bhonagiri V."/>
            <person name="Nash W."/>
            <person name="Johnson M."/>
            <person name="Thiruvilangam P."/>
            <person name="Wilson R."/>
        </authorList>
    </citation>
    <scope>NUCLEOTIDE SEQUENCE [LARGE SCALE GENOMIC DNA]</scope>
    <source>
        <strain>ATCC BAA-1250 / SPB7</strain>
    </source>
</reference>
<dbReference type="EMBL" id="CP000886">
    <property type="protein sequence ID" value="ABX68859.1"/>
    <property type="molecule type" value="Genomic_DNA"/>
</dbReference>
<dbReference type="RefSeq" id="WP_000963150.1">
    <property type="nucleotide sequence ID" value="NC_010102.1"/>
</dbReference>
<dbReference type="SMR" id="A9N0C5"/>
<dbReference type="KEGG" id="spq:SPAB_03518"/>
<dbReference type="PATRIC" id="fig|1016998.12.peg.3310"/>
<dbReference type="HOGENOM" id="CLU_040469_3_2_6"/>
<dbReference type="BioCyc" id="SENT1016998:SPAB_RS14325-MONOMER"/>
<dbReference type="Proteomes" id="UP000008556">
    <property type="component" value="Chromosome"/>
</dbReference>
<dbReference type="GO" id="GO:0005829">
    <property type="term" value="C:cytosol"/>
    <property type="evidence" value="ECO:0007669"/>
    <property type="project" value="TreeGrafter"/>
</dbReference>
<dbReference type="GO" id="GO:0005524">
    <property type="term" value="F:ATP binding"/>
    <property type="evidence" value="ECO:0007669"/>
    <property type="project" value="UniProtKB-UniRule"/>
</dbReference>
<dbReference type="GO" id="GO:0016887">
    <property type="term" value="F:ATP hydrolysis activity"/>
    <property type="evidence" value="ECO:0007669"/>
    <property type="project" value="InterPro"/>
</dbReference>
<dbReference type="GO" id="GO:0140664">
    <property type="term" value="F:ATP-dependent DNA damage sensor activity"/>
    <property type="evidence" value="ECO:0007669"/>
    <property type="project" value="InterPro"/>
</dbReference>
<dbReference type="GO" id="GO:0003684">
    <property type="term" value="F:damaged DNA binding"/>
    <property type="evidence" value="ECO:0007669"/>
    <property type="project" value="UniProtKB-UniRule"/>
</dbReference>
<dbReference type="GO" id="GO:0003697">
    <property type="term" value="F:single-stranded DNA binding"/>
    <property type="evidence" value="ECO:0007669"/>
    <property type="project" value="UniProtKB-UniRule"/>
</dbReference>
<dbReference type="GO" id="GO:0006310">
    <property type="term" value="P:DNA recombination"/>
    <property type="evidence" value="ECO:0007669"/>
    <property type="project" value="UniProtKB-UniRule"/>
</dbReference>
<dbReference type="GO" id="GO:0006281">
    <property type="term" value="P:DNA repair"/>
    <property type="evidence" value="ECO:0007669"/>
    <property type="project" value="UniProtKB-UniRule"/>
</dbReference>
<dbReference type="GO" id="GO:0009432">
    <property type="term" value="P:SOS response"/>
    <property type="evidence" value="ECO:0007669"/>
    <property type="project" value="UniProtKB-UniRule"/>
</dbReference>
<dbReference type="CDD" id="cd00983">
    <property type="entry name" value="RecA"/>
    <property type="match status" value="1"/>
</dbReference>
<dbReference type="FunFam" id="3.40.50.300:FF:000087">
    <property type="entry name" value="Recombinase RecA"/>
    <property type="match status" value="1"/>
</dbReference>
<dbReference type="Gene3D" id="3.40.50.300">
    <property type="entry name" value="P-loop containing nucleotide triphosphate hydrolases"/>
    <property type="match status" value="1"/>
</dbReference>
<dbReference type="HAMAP" id="MF_00268">
    <property type="entry name" value="RecA"/>
    <property type="match status" value="1"/>
</dbReference>
<dbReference type="InterPro" id="IPR003593">
    <property type="entry name" value="AAA+_ATPase"/>
</dbReference>
<dbReference type="InterPro" id="IPR013765">
    <property type="entry name" value="DNA_recomb/repair_RecA"/>
</dbReference>
<dbReference type="InterPro" id="IPR020584">
    <property type="entry name" value="DNA_recomb/repair_RecA_CS"/>
</dbReference>
<dbReference type="InterPro" id="IPR027417">
    <property type="entry name" value="P-loop_NTPase"/>
</dbReference>
<dbReference type="InterPro" id="IPR049261">
    <property type="entry name" value="RecA-like_C"/>
</dbReference>
<dbReference type="InterPro" id="IPR049428">
    <property type="entry name" value="RecA-like_N"/>
</dbReference>
<dbReference type="InterPro" id="IPR020588">
    <property type="entry name" value="RecA_ATP-bd"/>
</dbReference>
<dbReference type="InterPro" id="IPR023400">
    <property type="entry name" value="RecA_C_sf"/>
</dbReference>
<dbReference type="InterPro" id="IPR020587">
    <property type="entry name" value="RecA_monomer-monomer_interface"/>
</dbReference>
<dbReference type="NCBIfam" id="TIGR02012">
    <property type="entry name" value="tigrfam_recA"/>
    <property type="match status" value="1"/>
</dbReference>
<dbReference type="PANTHER" id="PTHR45900:SF1">
    <property type="entry name" value="MITOCHONDRIAL DNA REPAIR PROTEIN RECA HOMOLOG-RELATED"/>
    <property type="match status" value="1"/>
</dbReference>
<dbReference type="PANTHER" id="PTHR45900">
    <property type="entry name" value="RECA"/>
    <property type="match status" value="1"/>
</dbReference>
<dbReference type="Pfam" id="PF00154">
    <property type="entry name" value="RecA"/>
    <property type="match status" value="1"/>
</dbReference>
<dbReference type="Pfam" id="PF21096">
    <property type="entry name" value="RecA_C"/>
    <property type="match status" value="1"/>
</dbReference>
<dbReference type="PRINTS" id="PR00142">
    <property type="entry name" value="RECA"/>
</dbReference>
<dbReference type="SMART" id="SM00382">
    <property type="entry name" value="AAA"/>
    <property type="match status" value="1"/>
</dbReference>
<dbReference type="SUPFAM" id="SSF52540">
    <property type="entry name" value="P-loop containing nucleoside triphosphate hydrolases"/>
    <property type="match status" value="1"/>
</dbReference>
<dbReference type="SUPFAM" id="SSF54752">
    <property type="entry name" value="RecA protein, C-terminal domain"/>
    <property type="match status" value="1"/>
</dbReference>
<dbReference type="PROSITE" id="PS00321">
    <property type="entry name" value="RECA_1"/>
    <property type="match status" value="1"/>
</dbReference>
<dbReference type="PROSITE" id="PS50162">
    <property type="entry name" value="RECA_2"/>
    <property type="match status" value="1"/>
</dbReference>
<dbReference type="PROSITE" id="PS50163">
    <property type="entry name" value="RECA_3"/>
    <property type="match status" value="1"/>
</dbReference>
<keyword id="KW-0067">ATP-binding</keyword>
<keyword id="KW-0963">Cytoplasm</keyword>
<keyword id="KW-0227">DNA damage</keyword>
<keyword id="KW-0233">DNA recombination</keyword>
<keyword id="KW-0234">DNA repair</keyword>
<keyword id="KW-0238">DNA-binding</keyword>
<keyword id="KW-0547">Nucleotide-binding</keyword>
<keyword id="KW-0742">SOS response</keyword>
<gene>
    <name evidence="1" type="primary">recA</name>
    <name type="ordered locus">SPAB_03518</name>
</gene>
<name>RECA_SALPB</name>
<protein>
    <recommendedName>
        <fullName evidence="1">Protein RecA</fullName>
    </recommendedName>
    <alternativeName>
        <fullName evidence="1">Recombinase A</fullName>
    </alternativeName>
</protein>
<comment type="function">
    <text evidence="1">Can catalyze the hydrolysis of ATP in the presence of single-stranded DNA, the ATP-dependent uptake of single-stranded DNA by duplex DNA, and the ATP-dependent hybridization of homologous single-stranded DNAs. It interacts with LexA causing its activation and leading to its autocatalytic cleavage.</text>
</comment>
<comment type="subcellular location">
    <subcellularLocation>
        <location evidence="1">Cytoplasm</location>
    </subcellularLocation>
</comment>
<comment type="similarity">
    <text evidence="1">Belongs to the RecA family.</text>
</comment>
<feature type="chain" id="PRO_1000078678" description="Protein RecA">
    <location>
        <begin position="1"/>
        <end position="353"/>
    </location>
</feature>
<feature type="binding site" evidence="1">
    <location>
        <begin position="67"/>
        <end position="74"/>
    </location>
    <ligand>
        <name>ATP</name>
        <dbReference type="ChEBI" id="CHEBI:30616"/>
    </ligand>
</feature>
<proteinExistence type="inferred from homology"/>